<dbReference type="EC" id="7.1.1.-" evidence="1"/>
<dbReference type="EMBL" id="AE017321">
    <property type="protein sequence ID" value="AAW70716.1"/>
    <property type="molecule type" value="Genomic_DNA"/>
</dbReference>
<dbReference type="RefSeq" id="WP_011256326.1">
    <property type="nucleotide sequence ID" value="NC_006833.1"/>
</dbReference>
<dbReference type="SMR" id="Q5GTF8"/>
<dbReference type="STRING" id="292805.Wbm0125"/>
<dbReference type="KEGG" id="wbm:Wbm0125"/>
<dbReference type="eggNOG" id="COG0649">
    <property type="taxonomic scope" value="Bacteria"/>
</dbReference>
<dbReference type="HOGENOM" id="CLU_015134_1_1_5"/>
<dbReference type="Proteomes" id="UP000000534">
    <property type="component" value="Chromosome"/>
</dbReference>
<dbReference type="GO" id="GO:0005886">
    <property type="term" value="C:plasma membrane"/>
    <property type="evidence" value="ECO:0007669"/>
    <property type="project" value="UniProtKB-SubCell"/>
</dbReference>
<dbReference type="GO" id="GO:0051287">
    <property type="term" value="F:NAD binding"/>
    <property type="evidence" value="ECO:0007669"/>
    <property type="project" value="InterPro"/>
</dbReference>
<dbReference type="GO" id="GO:0050136">
    <property type="term" value="F:NADH:ubiquinone reductase (non-electrogenic) activity"/>
    <property type="evidence" value="ECO:0007669"/>
    <property type="project" value="UniProtKB-UniRule"/>
</dbReference>
<dbReference type="GO" id="GO:0048038">
    <property type="term" value="F:quinone binding"/>
    <property type="evidence" value="ECO:0007669"/>
    <property type="project" value="UniProtKB-KW"/>
</dbReference>
<dbReference type="FunFam" id="1.10.645.10:FF:000005">
    <property type="entry name" value="NADH-quinone oxidoreductase subunit D"/>
    <property type="match status" value="1"/>
</dbReference>
<dbReference type="Gene3D" id="1.10.645.10">
    <property type="entry name" value="Cytochrome-c3 Hydrogenase, chain B"/>
    <property type="match status" value="1"/>
</dbReference>
<dbReference type="HAMAP" id="MF_01358">
    <property type="entry name" value="NDH1_NuoD"/>
    <property type="match status" value="1"/>
</dbReference>
<dbReference type="InterPro" id="IPR001135">
    <property type="entry name" value="NADH_Q_OxRdtase_suD"/>
</dbReference>
<dbReference type="InterPro" id="IPR014029">
    <property type="entry name" value="NADH_UbQ_OxRdtase_49kDa_CS"/>
</dbReference>
<dbReference type="InterPro" id="IPR022885">
    <property type="entry name" value="NDH1_su_D/H"/>
</dbReference>
<dbReference type="InterPro" id="IPR029014">
    <property type="entry name" value="NiFe-Hase_large"/>
</dbReference>
<dbReference type="NCBIfam" id="TIGR01962">
    <property type="entry name" value="NuoD"/>
    <property type="match status" value="1"/>
</dbReference>
<dbReference type="NCBIfam" id="NF004739">
    <property type="entry name" value="PRK06075.1"/>
    <property type="match status" value="1"/>
</dbReference>
<dbReference type="PANTHER" id="PTHR11993:SF10">
    <property type="entry name" value="NADH DEHYDROGENASE [UBIQUINONE] IRON-SULFUR PROTEIN 2, MITOCHONDRIAL"/>
    <property type="match status" value="1"/>
</dbReference>
<dbReference type="PANTHER" id="PTHR11993">
    <property type="entry name" value="NADH-UBIQUINONE OXIDOREDUCTASE 49 KDA SUBUNIT"/>
    <property type="match status" value="1"/>
</dbReference>
<dbReference type="Pfam" id="PF00346">
    <property type="entry name" value="Complex1_49kDa"/>
    <property type="match status" value="1"/>
</dbReference>
<dbReference type="SUPFAM" id="SSF56762">
    <property type="entry name" value="HydB/Nqo4-like"/>
    <property type="match status" value="1"/>
</dbReference>
<dbReference type="PROSITE" id="PS00535">
    <property type="entry name" value="COMPLEX1_49K"/>
    <property type="match status" value="1"/>
</dbReference>
<evidence type="ECO:0000255" key="1">
    <source>
        <dbReference type="HAMAP-Rule" id="MF_01358"/>
    </source>
</evidence>
<organism>
    <name type="scientific">Wolbachia sp. subsp. Brugia malayi (strain TRS)</name>
    <dbReference type="NCBI Taxonomy" id="292805"/>
    <lineage>
        <taxon>Bacteria</taxon>
        <taxon>Pseudomonadati</taxon>
        <taxon>Pseudomonadota</taxon>
        <taxon>Alphaproteobacteria</taxon>
        <taxon>Rickettsiales</taxon>
        <taxon>Anaplasmataceae</taxon>
        <taxon>Wolbachieae</taxon>
        <taxon>Wolbachia</taxon>
    </lineage>
</organism>
<protein>
    <recommendedName>
        <fullName evidence="1">NADH-quinone oxidoreductase subunit D</fullName>
        <ecNumber evidence="1">7.1.1.-</ecNumber>
    </recommendedName>
    <alternativeName>
        <fullName evidence="1">NADH dehydrogenase I subunit D</fullName>
    </alternativeName>
    <alternativeName>
        <fullName evidence="1">NDH-1 subunit D</fullName>
    </alternativeName>
</protein>
<name>NUOD_WOLTR</name>
<proteinExistence type="inferred from homology"/>
<comment type="function">
    <text evidence="1">NDH-1 shuttles electrons from NADH, via FMN and iron-sulfur (Fe-S) centers, to quinones in the respiratory chain. The immediate electron acceptor for the enzyme in this species is believed to be ubiquinone. Couples the redox reaction to proton translocation (for every two electrons transferred, four hydrogen ions are translocated across the cytoplasmic membrane), and thus conserves the redox energy in a proton gradient.</text>
</comment>
<comment type="catalytic activity">
    <reaction evidence="1">
        <text>a quinone + NADH + 5 H(+)(in) = a quinol + NAD(+) + 4 H(+)(out)</text>
        <dbReference type="Rhea" id="RHEA:57888"/>
        <dbReference type="ChEBI" id="CHEBI:15378"/>
        <dbReference type="ChEBI" id="CHEBI:24646"/>
        <dbReference type="ChEBI" id="CHEBI:57540"/>
        <dbReference type="ChEBI" id="CHEBI:57945"/>
        <dbReference type="ChEBI" id="CHEBI:132124"/>
    </reaction>
</comment>
<comment type="subunit">
    <text evidence="1">NDH-1 is composed of 14 different subunits. Subunits NuoB, C, D, E, F, and G constitute the peripheral sector of the complex.</text>
</comment>
<comment type="subcellular location">
    <subcellularLocation>
        <location evidence="1">Cell membrane</location>
        <topology evidence="1">Peripheral membrane protein</topology>
        <orientation evidence="1">Cytoplasmic side</orientation>
    </subcellularLocation>
</comment>
<comment type="similarity">
    <text evidence="1">Belongs to the complex I 49 kDa subunit family.</text>
</comment>
<accession>Q5GTF8</accession>
<sequence>MSDLKTMMLNFGPQHPAAHGVLRLVLEMDGEIIERADPHIGLLHRGTEKLIEHKTYLQALPYFDRLDYVSPMSQEHAYSLCVEKLLQCEVPIRAKYLRVLFCELTRILNHLLNISSQALDVGAMTPLLWLFEEREKILEFYERASGARFHAAYIRPGGVAADVPEGLIEDIAKFIEQFPQYIDDVDELLTENRIWKQRTVGISEISIKQALDWGFSGPMLRAAGLAWDLRKSQPYEIYDQLDFDIPVGQNGDCYDRYLVRMEEIRQSVSLVKQCIEKIPEGPVKTEDRKISPPPRTEMKRSMEALIHHFKLYSEGYHVPEGEAYAAVEAPKGEFGVYIVSDGTNRPYRCRIRAPGFAHLQALDFMAKGHMLADVAAIIGSLDIVFGEIDR</sequence>
<keyword id="KW-1003">Cell membrane</keyword>
<keyword id="KW-0472">Membrane</keyword>
<keyword id="KW-0520">NAD</keyword>
<keyword id="KW-0874">Quinone</keyword>
<keyword id="KW-1185">Reference proteome</keyword>
<keyword id="KW-1278">Translocase</keyword>
<keyword id="KW-0813">Transport</keyword>
<keyword id="KW-0830">Ubiquinone</keyword>
<gene>
    <name evidence="1" type="primary">nuoD</name>
    <name type="ordered locus">Wbm0125</name>
</gene>
<feature type="chain" id="PRO_0000357953" description="NADH-quinone oxidoreductase subunit D">
    <location>
        <begin position="1"/>
        <end position="390"/>
    </location>
</feature>
<reference key="1">
    <citation type="journal article" date="2005" name="PLoS Biol.">
        <title>The Wolbachia genome of Brugia malayi: endosymbiont evolution within a human pathogenic nematode.</title>
        <authorList>
            <person name="Foster J."/>
            <person name="Ganatra M."/>
            <person name="Kamal I."/>
            <person name="Ware J."/>
            <person name="Makarova K."/>
            <person name="Ivanova N."/>
            <person name="Bhattacharyya A."/>
            <person name="Kapatral V."/>
            <person name="Kumar S."/>
            <person name="Posfai J."/>
            <person name="Vincze T."/>
            <person name="Ingram J."/>
            <person name="Moran L."/>
            <person name="Lapidus A."/>
            <person name="Omelchenko M."/>
            <person name="Kyrpides N."/>
            <person name="Ghedin E."/>
            <person name="Wang S."/>
            <person name="Goltsman E."/>
            <person name="Joukov V."/>
            <person name="Ostrovskaya O."/>
            <person name="Tsukerman K."/>
            <person name="Mazur M."/>
            <person name="Comb D."/>
            <person name="Koonin E."/>
            <person name="Slatko B."/>
        </authorList>
    </citation>
    <scope>NUCLEOTIDE SEQUENCE [LARGE SCALE GENOMIC DNA]</scope>
    <source>
        <strain>TRS</strain>
    </source>
</reference>